<gene>
    <name evidence="11" type="primary">PEX10</name>
    <name evidence="13" type="synonym">PAS7</name>
</gene>
<proteinExistence type="evidence at protein level"/>
<sequence length="419" mass="47948">MPPSEEIKLRAVSPRPDFKANYLEFANAPAIVRANQKDSYFETVLRDKLQNVIQIFKGQRFTHTHPEEIGVAAKALYLSLTTLLGTKTLGEEYVDLIYVSRDGKRIPRYLARAGFIFAYAILPYFLTRLFRRLKSSSTPKDEVTEEKINKELPISLRIEKYLSNMSYSKVLDTIMNLHIAVFYFSGQFYNISKRFFSMRYAFGHKINKERTPNGNYELLGGLIVLQLVMKSLGGFKGLIGSFTGNDEHDESNLRANNKDIMYGIPSEEEQEEAKQQLGIIDLSDPGQLPYIPESSRQCMLCLSYMTNPTAANCGHCFCWSCIIDWCKERQTVLCVGKKCWNSNCYHCIRLFYIPTLNKICFFFLLSFLSVRAASKEFKSTKEEFAELFNEELADIAGEDPHCPGPFPTGRTLGYFLVVF</sequence>
<dbReference type="EC" id="2.3.2.27" evidence="8"/>
<dbReference type="EMBL" id="U70066">
    <property type="protein sequence ID" value="AAB09086.1"/>
    <property type="molecule type" value="Genomic_DNA"/>
</dbReference>
<dbReference type="SMR" id="Q92265"/>
<dbReference type="UniPathway" id="UPA00143"/>
<dbReference type="GO" id="GO:0005778">
    <property type="term" value="C:peroxisomal membrane"/>
    <property type="evidence" value="ECO:0007669"/>
    <property type="project" value="UniProtKB-SubCell"/>
</dbReference>
<dbReference type="GO" id="GO:0016740">
    <property type="term" value="F:transferase activity"/>
    <property type="evidence" value="ECO:0007669"/>
    <property type="project" value="UniProtKB-KW"/>
</dbReference>
<dbReference type="GO" id="GO:0008270">
    <property type="term" value="F:zinc ion binding"/>
    <property type="evidence" value="ECO:0007669"/>
    <property type="project" value="UniProtKB-KW"/>
</dbReference>
<dbReference type="GO" id="GO:0016562">
    <property type="term" value="P:protein import into peroxisome matrix, receptor recycling"/>
    <property type="evidence" value="ECO:0000315"/>
    <property type="project" value="UniProtKB"/>
</dbReference>
<dbReference type="GO" id="GO:0016567">
    <property type="term" value="P:protein ubiquitination"/>
    <property type="evidence" value="ECO:0000315"/>
    <property type="project" value="UniProtKB"/>
</dbReference>
<dbReference type="Gene3D" id="3.30.40.10">
    <property type="entry name" value="Zinc/RING finger domain, C3HC4 (zinc finger)"/>
    <property type="match status" value="1"/>
</dbReference>
<dbReference type="InterPro" id="IPR025654">
    <property type="entry name" value="PEX2/10"/>
</dbReference>
<dbReference type="InterPro" id="IPR006845">
    <property type="entry name" value="Pex_N"/>
</dbReference>
<dbReference type="InterPro" id="IPR001841">
    <property type="entry name" value="Znf_RING"/>
</dbReference>
<dbReference type="InterPro" id="IPR013083">
    <property type="entry name" value="Znf_RING/FYVE/PHD"/>
</dbReference>
<dbReference type="InterPro" id="IPR017907">
    <property type="entry name" value="Znf_RING_CS"/>
</dbReference>
<dbReference type="PANTHER" id="PTHR23350">
    <property type="entry name" value="PEROXISOME ASSEMBLY PROTEIN 10"/>
    <property type="match status" value="1"/>
</dbReference>
<dbReference type="PANTHER" id="PTHR23350:SF0">
    <property type="entry name" value="PEROXISOME BIOGENESIS FACTOR 10"/>
    <property type="match status" value="1"/>
</dbReference>
<dbReference type="Pfam" id="PF04757">
    <property type="entry name" value="Pex2_Pex12"/>
    <property type="match status" value="1"/>
</dbReference>
<dbReference type="Pfam" id="PF15227">
    <property type="entry name" value="zf-C3HC4_4"/>
    <property type="match status" value="1"/>
</dbReference>
<dbReference type="SUPFAM" id="SSF57850">
    <property type="entry name" value="RING/U-box"/>
    <property type="match status" value="1"/>
</dbReference>
<dbReference type="PROSITE" id="PS00518">
    <property type="entry name" value="ZF_RING_1"/>
    <property type="match status" value="1"/>
</dbReference>
<dbReference type="PROSITE" id="PS50089">
    <property type="entry name" value="ZF_RING_2"/>
    <property type="match status" value="1"/>
</dbReference>
<protein>
    <recommendedName>
        <fullName evidence="11">Peroxisome biogenesis factor 10</fullName>
        <ecNumber evidence="8">2.3.2.27</ecNumber>
    </recommendedName>
    <alternativeName>
        <fullName evidence="12">E3 ubiquitin-protein ligase PEX10</fullName>
    </alternativeName>
    <alternativeName>
        <fullName evidence="11">Peroxin-10</fullName>
    </alternativeName>
    <alternativeName>
        <fullName evidence="11">Peroxisomal biogenesis factor 10</fullName>
    </alternativeName>
    <alternativeName>
        <fullName evidence="11">Peroxisome assembly protein 10</fullName>
    </alternativeName>
    <alternativeName>
        <fullName evidence="13">Peroxisome assembly protein PAS7</fullName>
    </alternativeName>
</protein>
<accession>Q92265</accession>
<keyword id="KW-0472">Membrane</keyword>
<keyword id="KW-0479">Metal-binding</keyword>
<keyword id="KW-0576">Peroxisome</keyword>
<keyword id="KW-0962">Peroxisome biogenesis</keyword>
<keyword id="KW-0653">Protein transport</keyword>
<keyword id="KW-0808">Transferase</keyword>
<keyword id="KW-0812">Transmembrane</keyword>
<keyword id="KW-1133">Transmembrane helix</keyword>
<keyword id="KW-0813">Transport</keyword>
<keyword id="KW-0833">Ubl conjugation pathway</keyword>
<keyword id="KW-0862">Zinc</keyword>
<keyword id="KW-0863">Zinc-finger</keyword>
<organism>
    <name type="scientific">Komagataella pastoris</name>
    <name type="common">Yeast</name>
    <name type="synonym">Pichia pastoris</name>
    <dbReference type="NCBI Taxonomy" id="4922"/>
    <lineage>
        <taxon>Eukaryota</taxon>
        <taxon>Fungi</taxon>
        <taxon>Dikarya</taxon>
        <taxon>Ascomycota</taxon>
        <taxon>Saccharomycotina</taxon>
        <taxon>Pichiomycetes</taxon>
        <taxon>Pichiales</taxon>
        <taxon>Pichiaceae</taxon>
        <taxon>Komagataella</taxon>
    </lineage>
</organism>
<evidence type="ECO:0000250" key="1">
    <source>
        <dbReference type="UniProtKB" id="G2Q0E2"/>
    </source>
</evidence>
<evidence type="ECO:0000250" key="2">
    <source>
        <dbReference type="UniProtKB" id="P32800"/>
    </source>
</evidence>
<evidence type="ECO:0000250" key="3">
    <source>
        <dbReference type="UniProtKB" id="Q05568"/>
    </source>
</evidence>
<evidence type="ECO:0000255" key="4"/>
<evidence type="ECO:0000255" key="5">
    <source>
        <dbReference type="PROSITE-ProRule" id="PRU00175"/>
    </source>
</evidence>
<evidence type="ECO:0000269" key="6">
    <source>
    </source>
</evidence>
<evidence type="ECO:0000269" key="7">
    <source>
    </source>
</evidence>
<evidence type="ECO:0000269" key="8">
    <source>
    </source>
</evidence>
<evidence type="ECO:0000269" key="9">
    <source>
    </source>
</evidence>
<evidence type="ECO:0000269" key="10">
    <source>
    </source>
</evidence>
<evidence type="ECO:0000303" key="11">
    <source>
    </source>
</evidence>
<evidence type="ECO:0000303" key="12">
    <source>
    </source>
</evidence>
<evidence type="ECO:0000303" key="13">
    <source>
    </source>
</evidence>
<evidence type="ECO:0000305" key="14"/>
<comment type="function">
    <text evidence="2 7 8 10">E3 ubiquitin-protein ligase component of the peroxisomal translocation complex (PubMed:12121419, PubMed:23344950, PubMed:7565793). The two types of peroxisomal matrix targeting signals, PTS1 and PTS2, are first recognized in the cytosol by their receptors PEX5 and PEX7, respectively, which then carry the cargo to the peroxisomal membrane. The peroxisomal targeting signal (PTS) receptor-cargo complexes interact with peroxisomal membrane protein (PMP) components of the docking complex. They have then additional downstream interactions with the translocation complex, leading to the transport of fully folded and oligomerized cargo into the peroxisome matrix (PubMed:12121419). The peroxisomal translocation complex forms the retrotranslocation channel with each subunit contributing transmembrane segments that coassemble into an open channel that specifically allows the passage of PEX5 and PEX20 through the peroxisomal membrane (By similarity). Specifically catalyzes monoubiquitination of PEX5 and/or PEX20 at 'Cys-6' and 'Cys-8', respectively, a modification that acts as a signal for PEX5 or PEX20 export from peroxisomes to the cytosol, thereby promoting PEX5 and PEX20 recycling (PubMed:12121419, PubMed:23344950).</text>
</comment>
<comment type="catalytic activity">
    <reaction evidence="8">
        <text>S-ubiquitinyl-[E2 ubiquitin-conjugating enzyme]-L-cysteine + [acceptor protein]-L-lysine = [E2 ubiquitin-conjugating enzyme]-L-cysteine + N(6)-ubiquitinyl-[acceptor protein]-L-lysine.</text>
        <dbReference type="EC" id="2.3.2.27"/>
    </reaction>
</comment>
<comment type="activity regulation">
    <text evidence="3">The E3 ubiquitin-protein ligase activity is stimulated by PEX12.</text>
</comment>
<comment type="pathway">
    <text evidence="10">Protein modification; protein ubiquitination.</text>
</comment>
<comment type="subunit">
    <text evidence="6 7 9">Component of the peroxisomal translocation complex, composed of at least PEX3, PEX2, PEX10 and PEX12 (PubMed:12121419). Interacts with PEX19 (PubMed:10359594, PubMed:28526747).</text>
</comment>
<comment type="subcellular location">
    <subcellularLocation>
        <location evidence="10">Peroxisome membrane</location>
        <topology evidence="4">Multi-pass membrane protein</topology>
    </subcellularLocation>
</comment>
<comment type="domain">
    <text evidence="1">The three subunits of the retrotranslocation channel (PEX2, PEX10 and PEX12) coassemble in the membrane into a channel with an open 10 Angstrom pore. The RING-type zinc-fingers that catalyze PEX5 or PEX20 receptor ubiquitination are positioned above the pore on the cytosolic side of the complex.</text>
</comment>
<comment type="disruption phenotype">
    <text evidence="10">Leads to a peroxisomal-deficient phenotype with the absence of peroxisomes and the accumulation of aberrant peroxisomal structures resembling 'membranous ghosts'.</text>
</comment>
<comment type="similarity">
    <text evidence="14">Belongs to the pex2/pex10/pex12 family.</text>
</comment>
<feature type="chain" id="PRO_0000056379" description="Peroxisome biogenesis factor 10">
    <location>
        <begin position="1"/>
        <end position="419"/>
    </location>
</feature>
<feature type="topological domain" description="Peroxisomal matrix" evidence="1">
    <location>
        <begin position="1"/>
        <end position="27"/>
    </location>
</feature>
<feature type="transmembrane region" description="Helical; Name=TM1" evidence="1">
    <location>
        <begin position="28"/>
        <end position="57"/>
    </location>
</feature>
<feature type="topological domain" description="Cytoplasmic" evidence="1">
    <location>
        <position position="58"/>
    </location>
</feature>
<feature type="transmembrane region" description="Helical; Name=TM2" evidence="1">
    <location>
        <begin position="59"/>
        <end position="80"/>
    </location>
</feature>
<feature type="topological domain" description="Peroxisomal matrix" evidence="1">
    <location>
        <begin position="81"/>
        <end position="108"/>
    </location>
</feature>
<feature type="transmembrane region" description="Helical; Name=TM3" evidence="1">
    <location>
        <begin position="109"/>
        <end position="141"/>
    </location>
</feature>
<feature type="topological domain" description="Cytoplasmic" evidence="1">
    <location>
        <begin position="142"/>
        <end position="158"/>
    </location>
</feature>
<feature type="transmembrane region" description="Helical; Name=TM4" evidence="1">
    <location>
        <begin position="159"/>
        <end position="185"/>
    </location>
</feature>
<feature type="topological domain" description="Peroxisomal matrix" evidence="1">
    <location>
        <begin position="186"/>
        <end position="215"/>
    </location>
</feature>
<feature type="transmembrane region" description="Helical; Name=TM5" evidence="1">
    <location>
        <begin position="216"/>
        <end position="235"/>
    </location>
</feature>
<feature type="topological domain" description="Cytoplasmic" evidence="1">
    <location>
        <begin position="236"/>
        <end position="419"/>
    </location>
</feature>
<feature type="zinc finger region" description="RING-type" evidence="5">
    <location>
        <begin position="298"/>
        <end position="360"/>
    </location>
</feature>
<feature type="binding site" evidence="1">
    <location>
        <position position="298"/>
    </location>
    <ligand>
        <name>Zn(2+)</name>
        <dbReference type="ChEBI" id="CHEBI:29105"/>
        <label>1</label>
    </ligand>
</feature>
<feature type="binding site" evidence="1">
    <location>
        <position position="301"/>
    </location>
    <ligand>
        <name>Zn(2+)</name>
        <dbReference type="ChEBI" id="CHEBI:29105"/>
        <label>1</label>
    </ligand>
</feature>
<feature type="binding site" evidence="1">
    <location>
        <position position="313"/>
    </location>
    <ligand>
        <name>Zn(2+)</name>
        <dbReference type="ChEBI" id="CHEBI:29105"/>
        <label>2</label>
    </ligand>
</feature>
<feature type="binding site" evidence="1">
    <location>
        <position position="315"/>
    </location>
    <ligand>
        <name>Zn(2+)</name>
        <dbReference type="ChEBI" id="CHEBI:29105"/>
        <label>2</label>
    </ligand>
</feature>
<feature type="binding site" evidence="1">
    <location>
        <position position="318"/>
    </location>
    <ligand>
        <name>Zn(2+)</name>
        <dbReference type="ChEBI" id="CHEBI:29105"/>
        <label>1</label>
    </ligand>
</feature>
<feature type="binding site" evidence="1">
    <location>
        <position position="321"/>
    </location>
    <ligand>
        <name>Zn(2+)</name>
        <dbReference type="ChEBI" id="CHEBI:29105"/>
        <label>1</label>
    </ligand>
</feature>
<feature type="binding site" evidence="14">
    <location>
        <position position="334"/>
    </location>
    <ligand>
        <name>Zn(2+)</name>
        <dbReference type="ChEBI" id="CHEBI:29105"/>
        <label>2</label>
    </ligand>
</feature>
<feature type="binding site" evidence="1">
    <location>
        <position position="347"/>
    </location>
    <ligand>
        <name>Zn(2+)</name>
        <dbReference type="ChEBI" id="CHEBI:29105"/>
        <label>2</label>
    </ligand>
</feature>
<feature type="mutagenesis site" description="Impaired recycling of PEX20." evidence="8">
    <original>CGHC</original>
    <variation>SGHS</variation>
    <location>
        <begin position="313"/>
        <end position="316"/>
    </location>
</feature>
<feature type="mutagenesis site" description="Loss of activity." evidence="10">
    <original>C</original>
    <variation>S</variation>
    <location>
        <position position="313"/>
    </location>
</feature>
<feature type="mutagenesis site" description="Loss of activity." evidence="10">
    <original>H</original>
    <variation>W</variation>
    <location>
        <position position="315"/>
    </location>
</feature>
<feature type="mutagenesis site" description="No loss of activity." evidence="10">
    <original>C</original>
    <variation>S</variation>
    <location>
        <position position="316"/>
    </location>
</feature>
<feature type="mutagenesis site" description="Loss of activity." evidence="10">
    <original>C</original>
    <variation>S</variation>
    <location>
        <position position="318"/>
    </location>
</feature>
<reference key="1">
    <citation type="journal article" date="1995" name="Mol. Cell. Biol.">
        <title>Formation of the peroxisome lumen is abolished by loss of Pichia pastoris Pas7p, a zinc-binding integral membrane protein of the peroxisome.</title>
        <authorList>
            <person name="Kalish J.E."/>
            <person name="Theda C."/>
            <person name="Morrell J.C."/>
            <person name="Berg J.M."/>
            <person name="Gould S.J."/>
        </authorList>
    </citation>
    <scope>NUCLEOTIDE SEQUENCE [GENOMIC DNA]</scope>
    <scope>FUNCTION</scope>
    <scope>DISRUPTION PHENOTYPE</scope>
    <scope>MUTAGENESIS OF CYS-313; HIS-315; CYS-316 AND CYS-318</scope>
    <scope>SUBCELLULAR LOCATION</scope>
</reference>
<reference key="2">
    <citation type="journal article" date="1999" name="Mol. Biol. Cell">
        <title>Pex19p interacts with Pex3p and Pex10p and is essential for peroxisome biogenesis in Pichia pastoris.</title>
        <authorList>
            <person name="Snyder W.B."/>
            <person name="Faber K.N."/>
            <person name="Wenzel T.J."/>
            <person name="Koller A."/>
            <person name="Lueers G.H."/>
            <person name="Rangell L."/>
            <person name="Keller G.A."/>
            <person name="Subramani S."/>
        </authorList>
    </citation>
    <scope>INTERACTION WITH PEX19</scope>
</reference>
<reference key="3">
    <citation type="journal article" date="2002" name="Traffic">
        <title>Peroxisome remnants in pex3delta cells and the requirement of Pex3p for interactions between the peroxisomal docking and translocation subcomplexes.</title>
        <authorList>
            <person name="Hazra P.P."/>
            <person name="Suriapranata I."/>
            <person name="Snyder W.B."/>
            <person name="Subramani S."/>
        </authorList>
    </citation>
    <scope>FUNCTION</scope>
    <scope>SUBUNIT</scope>
</reference>
<reference key="4">
    <citation type="journal article" date="2013" name="J. Biol. Chem.">
        <title>Unique requirements for mono- and polyubiquitination of the peroxisomal targeting signal co-receptor, Pex20.</title>
        <authorList>
            <person name="Liu X."/>
            <person name="Subramani S."/>
        </authorList>
    </citation>
    <scope>FUNCTION</scope>
    <scope>CATALYTIC ACTIVITY</scope>
    <scope>MUTAGENESIS OF 313-CYS--CYS-316</scope>
</reference>
<reference key="5">
    <citation type="journal article" date="2017" name="J. Biol. Chem.">
        <title>Functional regions of the peroxin Pex19 necessary for peroxisome biogenesis.</title>
        <authorList>
            <person name="Agrawal G."/>
            <person name="Shang H.H."/>
            <person name="Xia Z.J."/>
            <person name="Subramani S."/>
        </authorList>
    </citation>
    <scope>INTERACTION WITH PEX19</scope>
</reference>
<name>PEX10_PICPA</name>